<evidence type="ECO:0000255" key="1">
    <source>
        <dbReference type="HAMAP-Rule" id="MF_01333"/>
    </source>
</evidence>
<evidence type="ECO:0000305" key="2"/>
<comment type="function">
    <text evidence="1">This is one of the proteins that bind and probably mediate the attachment of the 5S RNA into the large ribosomal subunit, where it forms part of the central protuberance. In the 70S ribosome it contacts protein S13 of the 30S subunit (bridge B1b), connecting the 2 subunits; this bridge is implicated in subunit movement. Contacts the P site tRNA; the 5S rRNA and some of its associated proteins might help stabilize positioning of ribosome-bound tRNAs.</text>
</comment>
<comment type="subunit">
    <text evidence="1">Part of the 50S ribosomal subunit; part of the 5S rRNA/L5/L18/L25 subcomplex. Contacts the 5S rRNA and the P site tRNA. Forms a bridge to the 30S subunit in the 70S ribosome.</text>
</comment>
<comment type="similarity">
    <text evidence="1">Belongs to the universal ribosomal protein uL5 family.</text>
</comment>
<reference key="1">
    <citation type="journal article" date="2003" name="Proc. Natl. Acad. Sci. U.S.A.">
        <title>Reductive genome evolution in Buchnera aphidicola.</title>
        <authorList>
            <person name="van Ham R.C.H.J."/>
            <person name="Kamerbeek J."/>
            <person name="Palacios C."/>
            <person name="Rausell C."/>
            <person name="Abascal F."/>
            <person name="Bastolla U."/>
            <person name="Fernandez J.M."/>
            <person name="Jimenez L."/>
            <person name="Postigo M."/>
            <person name="Silva F.J."/>
            <person name="Tamames J."/>
            <person name="Viguera E."/>
            <person name="Latorre A."/>
            <person name="Valencia A."/>
            <person name="Moran F."/>
            <person name="Moya A."/>
        </authorList>
    </citation>
    <scope>NUCLEOTIDE SEQUENCE [LARGE SCALE GENOMIC DNA]</scope>
    <source>
        <strain>Bp</strain>
    </source>
</reference>
<feature type="chain" id="PRO_0000124906" description="Large ribosomal subunit protein uL5">
    <location>
        <begin position="1"/>
        <end position="179"/>
    </location>
</feature>
<gene>
    <name evidence="1" type="primary">rplE</name>
    <name type="ordered locus">bbp_455</name>
</gene>
<sequence>MVALYDYYKNSISKKLMLNFNYSSVMQVPKIDKITLNIGVGIATIDKKNLDFAISDLTKISGQKPLITKARKSIASFKIRKGYPIGCKVTLRGNRKWDFFERLIFIVIPRIRDFRGFSNKSFDGKGNYSIGIKEQIIFPEIDFDKIDRIRGINITITTTALSDREGYALLSAFNFPFRT</sequence>
<accession>Q89A78</accession>
<protein>
    <recommendedName>
        <fullName evidence="1">Large ribosomal subunit protein uL5</fullName>
    </recommendedName>
    <alternativeName>
        <fullName evidence="2">50S ribosomal protein L5</fullName>
    </alternativeName>
</protein>
<keyword id="KW-1185">Reference proteome</keyword>
<keyword id="KW-0687">Ribonucleoprotein</keyword>
<keyword id="KW-0689">Ribosomal protein</keyword>
<keyword id="KW-0694">RNA-binding</keyword>
<keyword id="KW-0699">rRNA-binding</keyword>
<keyword id="KW-0820">tRNA-binding</keyword>
<name>RL5_BUCBP</name>
<dbReference type="EMBL" id="AE016826">
    <property type="protein sequence ID" value="AAO27161.1"/>
    <property type="molecule type" value="Genomic_DNA"/>
</dbReference>
<dbReference type="RefSeq" id="WP_011091562.1">
    <property type="nucleotide sequence ID" value="NC_004545.1"/>
</dbReference>
<dbReference type="SMR" id="Q89A78"/>
<dbReference type="STRING" id="224915.bbp_455"/>
<dbReference type="KEGG" id="bab:bbp_455"/>
<dbReference type="eggNOG" id="COG0094">
    <property type="taxonomic scope" value="Bacteria"/>
</dbReference>
<dbReference type="HOGENOM" id="CLU_061015_2_1_6"/>
<dbReference type="OrthoDB" id="9806626at2"/>
<dbReference type="Proteomes" id="UP000000601">
    <property type="component" value="Chromosome"/>
</dbReference>
<dbReference type="GO" id="GO:1990904">
    <property type="term" value="C:ribonucleoprotein complex"/>
    <property type="evidence" value="ECO:0007669"/>
    <property type="project" value="UniProtKB-KW"/>
</dbReference>
<dbReference type="GO" id="GO:0005840">
    <property type="term" value="C:ribosome"/>
    <property type="evidence" value="ECO:0007669"/>
    <property type="project" value="UniProtKB-KW"/>
</dbReference>
<dbReference type="GO" id="GO:0019843">
    <property type="term" value="F:rRNA binding"/>
    <property type="evidence" value="ECO:0007669"/>
    <property type="project" value="UniProtKB-UniRule"/>
</dbReference>
<dbReference type="GO" id="GO:0003735">
    <property type="term" value="F:structural constituent of ribosome"/>
    <property type="evidence" value="ECO:0007669"/>
    <property type="project" value="InterPro"/>
</dbReference>
<dbReference type="GO" id="GO:0000049">
    <property type="term" value="F:tRNA binding"/>
    <property type="evidence" value="ECO:0007669"/>
    <property type="project" value="UniProtKB-UniRule"/>
</dbReference>
<dbReference type="GO" id="GO:0006412">
    <property type="term" value="P:translation"/>
    <property type="evidence" value="ECO:0007669"/>
    <property type="project" value="UniProtKB-UniRule"/>
</dbReference>
<dbReference type="FunFam" id="3.30.1440.10:FF:000001">
    <property type="entry name" value="50S ribosomal protein L5"/>
    <property type="match status" value="1"/>
</dbReference>
<dbReference type="Gene3D" id="3.30.1440.10">
    <property type="match status" value="1"/>
</dbReference>
<dbReference type="HAMAP" id="MF_01333_B">
    <property type="entry name" value="Ribosomal_uL5_B"/>
    <property type="match status" value="1"/>
</dbReference>
<dbReference type="InterPro" id="IPR002132">
    <property type="entry name" value="Ribosomal_uL5"/>
</dbReference>
<dbReference type="InterPro" id="IPR020930">
    <property type="entry name" value="Ribosomal_uL5_bac-type"/>
</dbReference>
<dbReference type="InterPro" id="IPR031309">
    <property type="entry name" value="Ribosomal_uL5_C"/>
</dbReference>
<dbReference type="InterPro" id="IPR020929">
    <property type="entry name" value="Ribosomal_uL5_CS"/>
</dbReference>
<dbReference type="InterPro" id="IPR022803">
    <property type="entry name" value="Ribosomal_uL5_dom_sf"/>
</dbReference>
<dbReference type="InterPro" id="IPR031310">
    <property type="entry name" value="Ribosomal_uL5_N"/>
</dbReference>
<dbReference type="NCBIfam" id="NF000585">
    <property type="entry name" value="PRK00010.1"/>
    <property type="match status" value="1"/>
</dbReference>
<dbReference type="PANTHER" id="PTHR11994">
    <property type="entry name" value="60S RIBOSOMAL PROTEIN L11-RELATED"/>
    <property type="match status" value="1"/>
</dbReference>
<dbReference type="Pfam" id="PF00281">
    <property type="entry name" value="Ribosomal_L5"/>
    <property type="match status" value="1"/>
</dbReference>
<dbReference type="Pfam" id="PF00673">
    <property type="entry name" value="Ribosomal_L5_C"/>
    <property type="match status" value="1"/>
</dbReference>
<dbReference type="PIRSF" id="PIRSF002161">
    <property type="entry name" value="Ribosomal_L5"/>
    <property type="match status" value="1"/>
</dbReference>
<dbReference type="SUPFAM" id="SSF55282">
    <property type="entry name" value="RL5-like"/>
    <property type="match status" value="1"/>
</dbReference>
<dbReference type="PROSITE" id="PS00358">
    <property type="entry name" value="RIBOSOMAL_L5"/>
    <property type="match status" value="1"/>
</dbReference>
<organism>
    <name type="scientific">Buchnera aphidicola subsp. Baizongia pistaciae (strain Bp)</name>
    <dbReference type="NCBI Taxonomy" id="224915"/>
    <lineage>
        <taxon>Bacteria</taxon>
        <taxon>Pseudomonadati</taxon>
        <taxon>Pseudomonadota</taxon>
        <taxon>Gammaproteobacteria</taxon>
        <taxon>Enterobacterales</taxon>
        <taxon>Erwiniaceae</taxon>
        <taxon>Buchnera</taxon>
    </lineage>
</organism>
<proteinExistence type="inferred from homology"/>